<proteinExistence type="inferred from homology"/>
<name>DNAJ_ACEP3</name>
<gene>
    <name evidence="1" type="primary">dnaJ</name>
    <name type="ordered locus">APA01_02910</name>
</gene>
<accession>Q75WD2</accession>
<accession>C7JC26</accession>
<comment type="function">
    <text evidence="1">Participates actively in the response to hyperosmotic and heat shock by preventing the aggregation of stress-denatured proteins and by disaggregating proteins, also in an autonomous, DnaK-independent fashion. Unfolded proteins bind initially to DnaJ; upon interaction with the DnaJ-bound protein, DnaK hydrolyzes its bound ATP, resulting in the formation of a stable complex. GrpE releases ADP from DnaK; ATP binding to DnaK triggers the release of the substrate protein, thus completing the reaction cycle. Several rounds of ATP-dependent interactions between DnaJ, DnaK and GrpE are required for fully efficient folding. Also involved, together with DnaK and GrpE, in the DNA replication of plasmids through activation of initiation proteins.</text>
</comment>
<comment type="cofactor">
    <cofactor evidence="1">
        <name>Zn(2+)</name>
        <dbReference type="ChEBI" id="CHEBI:29105"/>
    </cofactor>
    <text evidence="1">Binds 2 Zn(2+) ions per monomer.</text>
</comment>
<comment type="subunit">
    <text evidence="1">Homodimer.</text>
</comment>
<comment type="subcellular location">
    <subcellularLocation>
        <location evidence="1">Cytoplasm</location>
    </subcellularLocation>
</comment>
<comment type="domain">
    <text evidence="1">The J domain is necessary and sufficient to stimulate DnaK ATPase activity. Zinc center 1 plays an important role in the autonomous, DnaK-independent chaperone activity of DnaJ. Zinc center 2 is essential for interaction with DnaK and for DnaJ activity.</text>
</comment>
<comment type="similarity">
    <text evidence="1">Belongs to the DnaJ family.</text>
</comment>
<evidence type="ECO:0000255" key="1">
    <source>
        <dbReference type="HAMAP-Rule" id="MF_01152"/>
    </source>
</evidence>
<evidence type="ECO:0000305" key="2"/>
<keyword id="KW-0143">Chaperone</keyword>
<keyword id="KW-0963">Cytoplasm</keyword>
<keyword id="KW-0235">DNA replication</keyword>
<keyword id="KW-0479">Metal-binding</keyword>
<keyword id="KW-0677">Repeat</keyword>
<keyword id="KW-0346">Stress response</keyword>
<keyword id="KW-0862">Zinc</keyword>
<keyword id="KW-0863">Zinc-finger</keyword>
<protein>
    <recommendedName>
        <fullName evidence="1">Chaperone protein DnaJ</fullName>
    </recommendedName>
</protein>
<dbReference type="EMBL" id="AB121676">
    <property type="protein sequence ID" value="BAD14920.1"/>
    <property type="molecule type" value="Genomic_DNA"/>
</dbReference>
<dbReference type="EMBL" id="AP011121">
    <property type="protein sequence ID" value="BAH98443.1"/>
    <property type="molecule type" value="Genomic_DNA"/>
</dbReference>
<dbReference type="RefSeq" id="WP_003623818.1">
    <property type="nucleotide sequence ID" value="NC_013209.1"/>
</dbReference>
<dbReference type="SMR" id="Q75WD2"/>
<dbReference type="STRING" id="634452.APA01_02910"/>
<dbReference type="KEGG" id="apt:APA01_02910"/>
<dbReference type="eggNOG" id="COG0484">
    <property type="taxonomic scope" value="Bacteria"/>
</dbReference>
<dbReference type="HOGENOM" id="CLU_017633_0_7_5"/>
<dbReference type="BioCyc" id="APAS634452:APA01_RS01465-MONOMER"/>
<dbReference type="Proteomes" id="UP000000948">
    <property type="component" value="Chromosome"/>
</dbReference>
<dbReference type="GO" id="GO:0005737">
    <property type="term" value="C:cytoplasm"/>
    <property type="evidence" value="ECO:0007669"/>
    <property type="project" value="UniProtKB-SubCell"/>
</dbReference>
<dbReference type="GO" id="GO:0005524">
    <property type="term" value="F:ATP binding"/>
    <property type="evidence" value="ECO:0007669"/>
    <property type="project" value="InterPro"/>
</dbReference>
<dbReference type="GO" id="GO:0031072">
    <property type="term" value="F:heat shock protein binding"/>
    <property type="evidence" value="ECO:0007669"/>
    <property type="project" value="InterPro"/>
</dbReference>
<dbReference type="GO" id="GO:0051082">
    <property type="term" value="F:unfolded protein binding"/>
    <property type="evidence" value="ECO:0007669"/>
    <property type="project" value="UniProtKB-UniRule"/>
</dbReference>
<dbReference type="GO" id="GO:0008270">
    <property type="term" value="F:zinc ion binding"/>
    <property type="evidence" value="ECO:0007669"/>
    <property type="project" value="UniProtKB-UniRule"/>
</dbReference>
<dbReference type="GO" id="GO:0051085">
    <property type="term" value="P:chaperone cofactor-dependent protein refolding"/>
    <property type="evidence" value="ECO:0007669"/>
    <property type="project" value="TreeGrafter"/>
</dbReference>
<dbReference type="GO" id="GO:0006260">
    <property type="term" value="P:DNA replication"/>
    <property type="evidence" value="ECO:0007669"/>
    <property type="project" value="UniProtKB-KW"/>
</dbReference>
<dbReference type="GO" id="GO:0042026">
    <property type="term" value="P:protein refolding"/>
    <property type="evidence" value="ECO:0007669"/>
    <property type="project" value="TreeGrafter"/>
</dbReference>
<dbReference type="GO" id="GO:0009408">
    <property type="term" value="P:response to heat"/>
    <property type="evidence" value="ECO:0007669"/>
    <property type="project" value="InterPro"/>
</dbReference>
<dbReference type="CDD" id="cd06257">
    <property type="entry name" value="DnaJ"/>
    <property type="match status" value="1"/>
</dbReference>
<dbReference type="CDD" id="cd10747">
    <property type="entry name" value="DnaJ_C"/>
    <property type="match status" value="1"/>
</dbReference>
<dbReference type="CDD" id="cd10719">
    <property type="entry name" value="DnaJ_zf"/>
    <property type="match status" value="1"/>
</dbReference>
<dbReference type="FunFam" id="1.10.287.110:FF:000034">
    <property type="entry name" value="Chaperone protein DnaJ"/>
    <property type="match status" value="1"/>
</dbReference>
<dbReference type="FunFam" id="2.10.230.10:FF:000002">
    <property type="entry name" value="Molecular chaperone DnaJ"/>
    <property type="match status" value="1"/>
</dbReference>
<dbReference type="FunFam" id="2.60.260.20:FF:000004">
    <property type="entry name" value="Molecular chaperone DnaJ"/>
    <property type="match status" value="1"/>
</dbReference>
<dbReference type="Gene3D" id="1.10.287.110">
    <property type="entry name" value="DnaJ domain"/>
    <property type="match status" value="1"/>
</dbReference>
<dbReference type="Gene3D" id="2.10.230.10">
    <property type="entry name" value="Heat shock protein DnaJ, cysteine-rich domain"/>
    <property type="match status" value="1"/>
</dbReference>
<dbReference type="Gene3D" id="2.60.260.20">
    <property type="entry name" value="Urease metallochaperone UreE, N-terminal domain"/>
    <property type="match status" value="2"/>
</dbReference>
<dbReference type="HAMAP" id="MF_01152">
    <property type="entry name" value="DnaJ"/>
    <property type="match status" value="1"/>
</dbReference>
<dbReference type="InterPro" id="IPR012724">
    <property type="entry name" value="DnaJ"/>
</dbReference>
<dbReference type="InterPro" id="IPR002939">
    <property type="entry name" value="DnaJ_C"/>
</dbReference>
<dbReference type="InterPro" id="IPR001623">
    <property type="entry name" value="DnaJ_domain"/>
</dbReference>
<dbReference type="InterPro" id="IPR018253">
    <property type="entry name" value="DnaJ_domain_CS"/>
</dbReference>
<dbReference type="InterPro" id="IPR008971">
    <property type="entry name" value="HSP40/DnaJ_pept-bd"/>
</dbReference>
<dbReference type="InterPro" id="IPR001305">
    <property type="entry name" value="HSP_DnaJ_Cys-rich_dom"/>
</dbReference>
<dbReference type="InterPro" id="IPR036410">
    <property type="entry name" value="HSP_DnaJ_Cys-rich_dom_sf"/>
</dbReference>
<dbReference type="InterPro" id="IPR036869">
    <property type="entry name" value="J_dom_sf"/>
</dbReference>
<dbReference type="NCBIfam" id="TIGR02349">
    <property type="entry name" value="DnaJ_bact"/>
    <property type="match status" value="1"/>
</dbReference>
<dbReference type="NCBIfam" id="NF008035">
    <property type="entry name" value="PRK10767.1"/>
    <property type="match status" value="1"/>
</dbReference>
<dbReference type="PANTHER" id="PTHR43096:SF48">
    <property type="entry name" value="CHAPERONE PROTEIN DNAJ"/>
    <property type="match status" value="1"/>
</dbReference>
<dbReference type="PANTHER" id="PTHR43096">
    <property type="entry name" value="DNAJ HOMOLOG 1, MITOCHONDRIAL-RELATED"/>
    <property type="match status" value="1"/>
</dbReference>
<dbReference type="Pfam" id="PF00226">
    <property type="entry name" value="DnaJ"/>
    <property type="match status" value="1"/>
</dbReference>
<dbReference type="Pfam" id="PF01556">
    <property type="entry name" value="DnaJ_C"/>
    <property type="match status" value="1"/>
</dbReference>
<dbReference type="Pfam" id="PF00684">
    <property type="entry name" value="DnaJ_CXXCXGXG"/>
    <property type="match status" value="1"/>
</dbReference>
<dbReference type="PRINTS" id="PR00625">
    <property type="entry name" value="JDOMAIN"/>
</dbReference>
<dbReference type="SMART" id="SM00271">
    <property type="entry name" value="DnaJ"/>
    <property type="match status" value="1"/>
</dbReference>
<dbReference type="SUPFAM" id="SSF46565">
    <property type="entry name" value="Chaperone J-domain"/>
    <property type="match status" value="1"/>
</dbReference>
<dbReference type="SUPFAM" id="SSF57938">
    <property type="entry name" value="DnaJ/Hsp40 cysteine-rich domain"/>
    <property type="match status" value="1"/>
</dbReference>
<dbReference type="SUPFAM" id="SSF49493">
    <property type="entry name" value="HSP40/DnaJ peptide-binding domain"/>
    <property type="match status" value="2"/>
</dbReference>
<dbReference type="PROSITE" id="PS00636">
    <property type="entry name" value="DNAJ_1"/>
    <property type="match status" value="1"/>
</dbReference>
<dbReference type="PROSITE" id="PS50076">
    <property type="entry name" value="DNAJ_2"/>
    <property type="match status" value="1"/>
</dbReference>
<dbReference type="PROSITE" id="PS51188">
    <property type="entry name" value="ZF_CR"/>
    <property type="match status" value="1"/>
</dbReference>
<feature type="chain" id="PRO_0000070703" description="Chaperone protein DnaJ">
    <location>
        <begin position="1"/>
        <end position="380"/>
    </location>
</feature>
<feature type="domain" description="J" evidence="1">
    <location>
        <begin position="6"/>
        <end position="71"/>
    </location>
</feature>
<feature type="repeat" description="CXXCXGXG motif">
    <location>
        <begin position="149"/>
        <end position="156"/>
    </location>
</feature>
<feature type="repeat" description="CXXCXGXG motif">
    <location>
        <begin position="167"/>
        <end position="174"/>
    </location>
</feature>
<feature type="repeat" description="CXXCXGXG motif">
    <location>
        <begin position="189"/>
        <end position="196"/>
    </location>
</feature>
<feature type="repeat" description="CXXCXGXG motif">
    <location>
        <begin position="203"/>
        <end position="210"/>
    </location>
</feature>
<feature type="zinc finger region" description="CR-type" evidence="1">
    <location>
        <begin position="136"/>
        <end position="215"/>
    </location>
</feature>
<feature type="binding site" evidence="1">
    <location>
        <position position="149"/>
    </location>
    <ligand>
        <name>Zn(2+)</name>
        <dbReference type="ChEBI" id="CHEBI:29105"/>
        <label>1</label>
    </ligand>
</feature>
<feature type="binding site" evidence="1">
    <location>
        <position position="152"/>
    </location>
    <ligand>
        <name>Zn(2+)</name>
        <dbReference type="ChEBI" id="CHEBI:29105"/>
        <label>1</label>
    </ligand>
</feature>
<feature type="binding site" evidence="1">
    <location>
        <position position="167"/>
    </location>
    <ligand>
        <name>Zn(2+)</name>
        <dbReference type="ChEBI" id="CHEBI:29105"/>
        <label>2</label>
    </ligand>
</feature>
<feature type="binding site" evidence="1">
    <location>
        <position position="170"/>
    </location>
    <ligand>
        <name>Zn(2+)</name>
        <dbReference type="ChEBI" id="CHEBI:29105"/>
        <label>2</label>
    </ligand>
</feature>
<feature type="binding site" evidence="1">
    <location>
        <position position="189"/>
    </location>
    <ligand>
        <name>Zn(2+)</name>
        <dbReference type="ChEBI" id="CHEBI:29105"/>
        <label>2</label>
    </ligand>
</feature>
<feature type="binding site" evidence="1">
    <location>
        <position position="192"/>
    </location>
    <ligand>
        <name>Zn(2+)</name>
        <dbReference type="ChEBI" id="CHEBI:29105"/>
        <label>2</label>
    </ligand>
</feature>
<feature type="binding site" evidence="1">
    <location>
        <position position="203"/>
    </location>
    <ligand>
        <name>Zn(2+)</name>
        <dbReference type="ChEBI" id="CHEBI:29105"/>
        <label>1</label>
    </ligand>
</feature>
<feature type="binding site" evidence="1">
    <location>
        <position position="206"/>
    </location>
    <ligand>
        <name>Zn(2+)</name>
        <dbReference type="ChEBI" id="CHEBI:29105"/>
        <label>1</label>
    </ligand>
</feature>
<feature type="sequence conflict" description="In Ref. 1; BAD14920." evidence="2" ref="1">
    <original>G</original>
    <variation>S</variation>
    <location>
        <position position="88"/>
    </location>
</feature>
<feature type="sequence conflict" description="In Ref. 1; BAD14920." evidence="2" ref="1">
    <original>RVACEA</original>
    <variation>LGVRT</variation>
    <location>
        <begin position="146"/>
        <end position="151"/>
    </location>
</feature>
<feature type="sequence conflict" description="In Ref. 1; BAD14920." evidence="2" ref="1">
    <original>QQ</original>
    <variation>HE</variation>
    <location>
        <begin position="179"/>
        <end position="180"/>
    </location>
</feature>
<feature type="sequence conflict" description="In Ref. 1; BAD14920." evidence="2" ref="1">
    <original>V</original>
    <variation>F</variation>
    <location>
        <position position="205"/>
    </location>
</feature>
<feature type="sequence conflict" description="In Ref. 1; BAD14920." evidence="2" ref="1">
    <original>L</original>
    <variation>F</variation>
    <location>
        <position position="275"/>
    </location>
</feature>
<feature type="sequence conflict" description="In Ref. 1; BAD14920." evidence="2" ref="1">
    <original>HFR</original>
    <variation>TFS</variation>
    <location>
        <begin position="309"/>
        <end position="311"/>
    </location>
</feature>
<reference key="1">
    <citation type="journal article" date="2004" name="J. Biosci. Bioeng.">
        <title>Cloning and characterization of the dnaKJ operon in Acetobacter aceti.</title>
        <authorList>
            <person name="Okamoto-Kainuma A."/>
            <person name="Wan Y."/>
            <person name="Fukaya M."/>
            <person name="Tsukamoto Y."/>
            <person name="Ishikawa M."/>
            <person name="Koizumi Y."/>
        </authorList>
    </citation>
    <scope>NUCLEOTIDE SEQUENCE [GENOMIC DNA]</scope>
    <source>
        <strain>NBRC 105184 / IFO 3283-01</strain>
    </source>
</reference>
<reference key="2">
    <citation type="journal article" date="2009" name="Nucleic Acids Res.">
        <title>Whole-genome analyses reveal genetic instability of Acetobacter pasteurianus.</title>
        <authorList>
            <person name="Azuma Y."/>
            <person name="Hosoyama A."/>
            <person name="Matsutani M."/>
            <person name="Furuya N."/>
            <person name="Horikawa H."/>
            <person name="Harada T."/>
            <person name="Hirakawa H."/>
            <person name="Kuhara S."/>
            <person name="Matsushita K."/>
            <person name="Fujita N."/>
            <person name="Shirai M."/>
        </authorList>
    </citation>
    <scope>NUCLEOTIDE SEQUENCE [LARGE SCALE GENOMIC DNA]</scope>
    <source>
        <strain>NBRC 105184 / IFO 3283-01</strain>
    </source>
</reference>
<organism>
    <name type="scientific">Acetobacter pasteurianus (strain NBRC 105184 / IFO 3283-01)</name>
    <dbReference type="NCBI Taxonomy" id="634452"/>
    <lineage>
        <taxon>Bacteria</taxon>
        <taxon>Pseudomonadati</taxon>
        <taxon>Pseudomonadota</taxon>
        <taxon>Alphaproteobacteria</taxon>
        <taxon>Acetobacterales</taxon>
        <taxon>Acetobacteraceae</taxon>
        <taxon>Acetobacter</taxon>
    </lineage>
</organism>
<sequence length="380" mass="41177">MATQLDYYAILEVSRTATADELKKSYRKLAMKYHPDRNPGDDAAEAKFKEINQAYDILKDEQKRAAYDQYGHAAFEGGGPGPGGFDFGGGFGGGGLGDIFEQMFGDMMGGRRGGRARTGNDIQTHVEITLEEAFSGVKKDVRVITRVACEACHGTGSDDGASGVEVCPSCHGAGKVRAQQGFFVVERPCPTCHGAGKVVKNPCKVCHGEGTVEKERTVEVQIPAGVEDGTRIRLSGEGEAGGNGVPPGDLYIHVSVTEHGIFQRDGANIYCRVPLRMAQAALGTEIEVPVIDGSRTKVKIPAGTQTGAHFRLRGKGFSVLRSTARGDMYIQVTVETPQNLSKRQRELLEEFEKEAGEDVKQSPEHTGFFRRVRDFFEGKE</sequence>